<accession>C6DJG4</accession>
<protein>
    <recommendedName>
        <fullName evidence="1">Ribosomal RNA small subunit methyltransferase G</fullName>
        <ecNumber evidence="1">2.1.1.170</ecNumber>
    </recommendedName>
    <alternativeName>
        <fullName evidence="1">16S rRNA 7-methylguanosine methyltransferase</fullName>
        <shortName evidence="1">16S rRNA m7G methyltransferase</shortName>
    </alternativeName>
</protein>
<organism>
    <name type="scientific">Pectobacterium carotovorum subsp. carotovorum (strain PC1)</name>
    <dbReference type="NCBI Taxonomy" id="561230"/>
    <lineage>
        <taxon>Bacteria</taxon>
        <taxon>Pseudomonadati</taxon>
        <taxon>Pseudomonadota</taxon>
        <taxon>Gammaproteobacteria</taxon>
        <taxon>Enterobacterales</taxon>
        <taxon>Pectobacteriaceae</taxon>
        <taxon>Pectobacterium</taxon>
    </lineage>
</organism>
<proteinExistence type="inferred from homology"/>
<gene>
    <name evidence="1" type="primary">rsmG</name>
    <name type="ordered locus">PC1_4249</name>
</gene>
<dbReference type="EC" id="2.1.1.170" evidence="1"/>
<dbReference type="EMBL" id="CP001657">
    <property type="protein sequence ID" value="ACT15263.1"/>
    <property type="molecule type" value="Genomic_DNA"/>
</dbReference>
<dbReference type="RefSeq" id="WP_015842327.1">
    <property type="nucleotide sequence ID" value="NC_012917.1"/>
</dbReference>
<dbReference type="SMR" id="C6DJG4"/>
<dbReference type="STRING" id="561230.PC1_4249"/>
<dbReference type="KEGG" id="pct:PC1_4249"/>
<dbReference type="eggNOG" id="COG0357">
    <property type="taxonomic scope" value="Bacteria"/>
</dbReference>
<dbReference type="HOGENOM" id="CLU_065341_2_2_6"/>
<dbReference type="OrthoDB" id="9808773at2"/>
<dbReference type="Proteomes" id="UP000002736">
    <property type="component" value="Chromosome"/>
</dbReference>
<dbReference type="GO" id="GO:0005829">
    <property type="term" value="C:cytosol"/>
    <property type="evidence" value="ECO:0007669"/>
    <property type="project" value="TreeGrafter"/>
</dbReference>
<dbReference type="GO" id="GO:0070043">
    <property type="term" value="F:rRNA (guanine-N7-)-methyltransferase activity"/>
    <property type="evidence" value="ECO:0007669"/>
    <property type="project" value="UniProtKB-UniRule"/>
</dbReference>
<dbReference type="CDD" id="cd02440">
    <property type="entry name" value="AdoMet_MTases"/>
    <property type="match status" value="1"/>
</dbReference>
<dbReference type="FunFam" id="3.40.50.150:FF:000032">
    <property type="entry name" value="Ribosomal RNA small subunit methyltransferase G"/>
    <property type="match status" value="1"/>
</dbReference>
<dbReference type="Gene3D" id="3.40.50.150">
    <property type="entry name" value="Vaccinia Virus protein VP39"/>
    <property type="match status" value="1"/>
</dbReference>
<dbReference type="HAMAP" id="MF_00074">
    <property type="entry name" value="16SrRNA_methyltr_G"/>
    <property type="match status" value="1"/>
</dbReference>
<dbReference type="InterPro" id="IPR003682">
    <property type="entry name" value="rRNA_ssu_MeTfrase_G"/>
</dbReference>
<dbReference type="InterPro" id="IPR029063">
    <property type="entry name" value="SAM-dependent_MTases_sf"/>
</dbReference>
<dbReference type="NCBIfam" id="TIGR00138">
    <property type="entry name" value="rsmG_gidB"/>
    <property type="match status" value="1"/>
</dbReference>
<dbReference type="PANTHER" id="PTHR31760">
    <property type="entry name" value="S-ADENOSYL-L-METHIONINE-DEPENDENT METHYLTRANSFERASES SUPERFAMILY PROTEIN"/>
    <property type="match status" value="1"/>
</dbReference>
<dbReference type="PANTHER" id="PTHR31760:SF0">
    <property type="entry name" value="S-ADENOSYL-L-METHIONINE-DEPENDENT METHYLTRANSFERASES SUPERFAMILY PROTEIN"/>
    <property type="match status" value="1"/>
</dbReference>
<dbReference type="Pfam" id="PF02527">
    <property type="entry name" value="GidB"/>
    <property type="match status" value="1"/>
</dbReference>
<dbReference type="PIRSF" id="PIRSF003078">
    <property type="entry name" value="GidB"/>
    <property type="match status" value="1"/>
</dbReference>
<dbReference type="SUPFAM" id="SSF53335">
    <property type="entry name" value="S-adenosyl-L-methionine-dependent methyltransferases"/>
    <property type="match status" value="1"/>
</dbReference>
<evidence type="ECO:0000255" key="1">
    <source>
        <dbReference type="HAMAP-Rule" id="MF_00074"/>
    </source>
</evidence>
<feature type="chain" id="PRO_1000202504" description="Ribosomal RNA small subunit methyltransferase G">
    <location>
        <begin position="1"/>
        <end position="206"/>
    </location>
</feature>
<feature type="binding site" evidence="1">
    <location>
        <position position="73"/>
    </location>
    <ligand>
        <name>S-adenosyl-L-methionine</name>
        <dbReference type="ChEBI" id="CHEBI:59789"/>
    </ligand>
</feature>
<feature type="binding site" evidence="1">
    <location>
        <position position="78"/>
    </location>
    <ligand>
        <name>S-adenosyl-L-methionine</name>
        <dbReference type="ChEBI" id="CHEBI:59789"/>
    </ligand>
</feature>
<feature type="binding site" evidence="1">
    <location>
        <begin position="124"/>
        <end position="125"/>
    </location>
    <ligand>
        <name>S-adenosyl-L-methionine</name>
        <dbReference type="ChEBI" id="CHEBI:59789"/>
    </ligand>
</feature>
<feature type="binding site" evidence="1">
    <location>
        <position position="139"/>
    </location>
    <ligand>
        <name>S-adenosyl-L-methionine</name>
        <dbReference type="ChEBI" id="CHEBI:59789"/>
    </ligand>
</feature>
<sequence length="206" mass="23185">MRNTLDNLLNAAGIVISDKQKNLLIQYVDMLNKWNKAYNLTSVRDPQQMLVRHIMDSIVVEPHLHGQRFIDVGTGPGLPGIPLAIVRPDSHFTLLDSLGKRVRFLRQVQHELQLENITPVQSRVEEFPAEPPFDGVISRAFASLHDMISWCNHLPARPAGRFYALKGVLPEDELSSLPQGVSLDQVIRLSVPDLEGERHLVVLKPN</sequence>
<comment type="function">
    <text evidence="1">Specifically methylates the N7 position of guanine in position 527 of 16S rRNA.</text>
</comment>
<comment type="catalytic activity">
    <reaction evidence="1">
        <text>guanosine(527) in 16S rRNA + S-adenosyl-L-methionine = N(7)-methylguanosine(527) in 16S rRNA + S-adenosyl-L-homocysteine</text>
        <dbReference type="Rhea" id="RHEA:42732"/>
        <dbReference type="Rhea" id="RHEA-COMP:10209"/>
        <dbReference type="Rhea" id="RHEA-COMP:10210"/>
        <dbReference type="ChEBI" id="CHEBI:57856"/>
        <dbReference type="ChEBI" id="CHEBI:59789"/>
        <dbReference type="ChEBI" id="CHEBI:74269"/>
        <dbReference type="ChEBI" id="CHEBI:74480"/>
        <dbReference type="EC" id="2.1.1.170"/>
    </reaction>
</comment>
<comment type="subcellular location">
    <subcellularLocation>
        <location evidence="1">Cytoplasm</location>
    </subcellularLocation>
</comment>
<comment type="similarity">
    <text evidence="1">Belongs to the methyltransferase superfamily. RNA methyltransferase RsmG family.</text>
</comment>
<keyword id="KW-0963">Cytoplasm</keyword>
<keyword id="KW-0489">Methyltransferase</keyword>
<keyword id="KW-0698">rRNA processing</keyword>
<keyword id="KW-0949">S-adenosyl-L-methionine</keyword>
<keyword id="KW-0808">Transferase</keyword>
<reference key="1">
    <citation type="submission" date="2009-07" db="EMBL/GenBank/DDBJ databases">
        <title>Complete sequence of Pectobacterium carotovorum subsp. carotovorum PC1.</title>
        <authorList>
            <consortium name="US DOE Joint Genome Institute"/>
            <person name="Lucas S."/>
            <person name="Copeland A."/>
            <person name="Lapidus A."/>
            <person name="Glavina del Rio T."/>
            <person name="Tice H."/>
            <person name="Bruce D."/>
            <person name="Goodwin L."/>
            <person name="Pitluck S."/>
            <person name="Munk A.C."/>
            <person name="Brettin T."/>
            <person name="Detter J.C."/>
            <person name="Han C."/>
            <person name="Tapia R."/>
            <person name="Larimer F."/>
            <person name="Land M."/>
            <person name="Hauser L."/>
            <person name="Kyrpides N."/>
            <person name="Mikhailova N."/>
            <person name="Balakrishnan V."/>
            <person name="Glasner J."/>
            <person name="Perna N.T."/>
        </authorList>
    </citation>
    <scope>NUCLEOTIDE SEQUENCE [LARGE SCALE GENOMIC DNA]</scope>
    <source>
        <strain>PC1</strain>
    </source>
</reference>
<name>RSMG_PECCP</name>